<dbReference type="PIR" id="S27050">
    <property type="entry name" value="S27050"/>
</dbReference>
<dbReference type="SMR" id="P62363"/>
<dbReference type="GO" id="GO:0072562">
    <property type="term" value="C:blood microparticle"/>
    <property type="evidence" value="ECO:0007669"/>
    <property type="project" value="TreeGrafter"/>
</dbReference>
<dbReference type="GO" id="GO:0031838">
    <property type="term" value="C:haptoglobin-hemoglobin complex"/>
    <property type="evidence" value="ECO:0007669"/>
    <property type="project" value="TreeGrafter"/>
</dbReference>
<dbReference type="GO" id="GO:0005833">
    <property type="term" value="C:hemoglobin complex"/>
    <property type="evidence" value="ECO:0007669"/>
    <property type="project" value="InterPro"/>
</dbReference>
<dbReference type="GO" id="GO:0031720">
    <property type="term" value="F:haptoglobin binding"/>
    <property type="evidence" value="ECO:0007669"/>
    <property type="project" value="TreeGrafter"/>
</dbReference>
<dbReference type="GO" id="GO:0020037">
    <property type="term" value="F:heme binding"/>
    <property type="evidence" value="ECO:0007669"/>
    <property type="project" value="InterPro"/>
</dbReference>
<dbReference type="GO" id="GO:0046872">
    <property type="term" value="F:metal ion binding"/>
    <property type="evidence" value="ECO:0007669"/>
    <property type="project" value="UniProtKB-KW"/>
</dbReference>
<dbReference type="GO" id="GO:0043177">
    <property type="term" value="F:organic acid binding"/>
    <property type="evidence" value="ECO:0007669"/>
    <property type="project" value="TreeGrafter"/>
</dbReference>
<dbReference type="GO" id="GO:0019825">
    <property type="term" value="F:oxygen binding"/>
    <property type="evidence" value="ECO:0007669"/>
    <property type="project" value="InterPro"/>
</dbReference>
<dbReference type="GO" id="GO:0005344">
    <property type="term" value="F:oxygen carrier activity"/>
    <property type="evidence" value="ECO:0007669"/>
    <property type="project" value="UniProtKB-KW"/>
</dbReference>
<dbReference type="GO" id="GO:0004601">
    <property type="term" value="F:peroxidase activity"/>
    <property type="evidence" value="ECO:0007669"/>
    <property type="project" value="TreeGrafter"/>
</dbReference>
<dbReference type="GO" id="GO:0042744">
    <property type="term" value="P:hydrogen peroxide catabolic process"/>
    <property type="evidence" value="ECO:0007669"/>
    <property type="project" value="TreeGrafter"/>
</dbReference>
<dbReference type="CDD" id="cd08927">
    <property type="entry name" value="Hb-alpha-like"/>
    <property type="match status" value="1"/>
</dbReference>
<dbReference type="FunFam" id="1.10.490.10:FF:000002">
    <property type="entry name" value="Hemoglobin subunit alpha"/>
    <property type="match status" value="1"/>
</dbReference>
<dbReference type="Gene3D" id="1.10.490.10">
    <property type="entry name" value="Globins"/>
    <property type="match status" value="1"/>
</dbReference>
<dbReference type="InterPro" id="IPR000971">
    <property type="entry name" value="Globin"/>
</dbReference>
<dbReference type="InterPro" id="IPR009050">
    <property type="entry name" value="Globin-like_sf"/>
</dbReference>
<dbReference type="InterPro" id="IPR012292">
    <property type="entry name" value="Globin/Proto"/>
</dbReference>
<dbReference type="InterPro" id="IPR002338">
    <property type="entry name" value="Hemoglobin_a-typ"/>
</dbReference>
<dbReference type="InterPro" id="IPR050056">
    <property type="entry name" value="Hemoglobin_oxygen_transport"/>
</dbReference>
<dbReference type="PANTHER" id="PTHR11442:SF91">
    <property type="entry name" value="EMBRYONIC ALPHA GLOBIN E1-RELATED"/>
    <property type="match status" value="1"/>
</dbReference>
<dbReference type="PANTHER" id="PTHR11442">
    <property type="entry name" value="HEMOGLOBIN FAMILY MEMBER"/>
    <property type="match status" value="1"/>
</dbReference>
<dbReference type="Pfam" id="PF00042">
    <property type="entry name" value="Globin"/>
    <property type="match status" value="1"/>
</dbReference>
<dbReference type="PRINTS" id="PR00612">
    <property type="entry name" value="ALPHAHAEM"/>
</dbReference>
<dbReference type="SUPFAM" id="SSF46458">
    <property type="entry name" value="Globin-like"/>
    <property type="match status" value="1"/>
</dbReference>
<dbReference type="PROSITE" id="PS01033">
    <property type="entry name" value="GLOBIN"/>
    <property type="match status" value="1"/>
</dbReference>
<accession>P62363</accession>
<accession>P16308</accession>
<feature type="chain" id="PRO_0000052704" description="Hemoglobin subunit alpha-2">
    <location>
        <begin position="1"/>
        <end position="141"/>
    </location>
</feature>
<feature type="domain" description="Globin" evidence="2">
    <location>
        <begin position="1"/>
        <end position="141"/>
    </location>
</feature>
<feature type="binding site" evidence="2">
    <location>
        <position position="59"/>
    </location>
    <ligand>
        <name>O2</name>
        <dbReference type="ChEBI" id="CHEBI:15379"/>
    </ligand>
</feature>
<feature type="binding site" description="proximal binding residue" evidence="2">
    <location>
        <position position="88"/>
    </location>
    <ligand>
        <name>heme b</name>
        <dbReference type="ChEBI" id="CHEBI:60344"/>
    </ligand>
    <ligandPart>
        <name>Fe</name>
        <dbReference type="ChEBI" id="CHEBI:18248"/>
    </ligandPart>
</feature>
<feature type="modified residue" description="N-acetylserine" evidence="1">
    <location>
        <position position="1"/>
    </location>
</feature>
<name>HBA2_NOTAN</name>
<comment type="function">
    <text>Involved in oxygen transport from gills to the various peripheral tissues.</text>
</comment>
<comment type="subunit">
    <text>Hb2 is a heterotetramer of two alpha-2 chains and two beta chains.</text>
</comment>
<comment type="tissue specificity">
    <text>Red blood cells.</text>
</comment>
<comment type="miscellaneous">
    <text>This fish has two hemoglobins: Hb1 and Hb2.</text>
</comment>
<comment type="similarity">
    <text evidence="2">Belongs to the globin family.</text>
</comment>
<proteinExistence type="evidence at protein level"/>
<gene>
    <name type="primary">hba2</name>
</gene>
<sequence length="141" mass="15720">SLSTKDKETVKAFWSKVSGKSEDIGNDALSRMLVVYPQTKTYFSHWKELTPGSAPVRKHGMTVMKGVGDAVSKIEDLTAGLMELSELHAFTLRVDPANFKISHNILVVFAIMFPKEFTAEVHVSMDKFLAALARALSEKYR</sequence>
<protein>
    <recommendedName>
        <fullName>Hemoglobin subunit alpha-2</fullName>
    </recommendedName>
    <alternativeName>
        <fullName>Alpha-2-globin</fullName>
    </alternativeName>
    <alternativeName>
        <fullName>Hemoglobin alpha-2 chain</fullName>
    </alternativeName>
</protein>
<organism>
    <name type="scientific">Notothenia angustata</name>
    <name type="common">Rockcod</name>
    <dbReference type="NCBI Taxonomy" id="8210"/>
    <lineage>
        <taxon>Eukaryota</taxon>
        <taxon>Metazoa</taxon>
        <taxon>Chordata</taxon>
        <taxon>Craniata</taxon>
        <taxon>Vertebrata</taxon>
        <taxon>Euteleostomi</taxon>
        <taxon>Actinopterygii</taxon>
        <taxon>Neopterygii</taxon>
        <taxon>Teleostei</taxon>
        <taxon>Neoteleostei</taxon>
        <taxon>Acanthomorphata</taxon>
        <taxon>Eupercaria</taxon>
        <taxon>Perciformes</taxon>
        <taxon>Notothenioidei</taxon>
        <taxon>Nototheniidae</taxon>
        <taxon>Notothenia</taxon>
    </lineage>
</organism>
<keyword id="KW-0007">Acetylation</keyword>
<keyword id="KW-0903">Direct protein sequencing</keyword>
<keyword id="KW-0349">Heme</keyword>
<keyword id="KW-0408">Iron</keyword>
<keyword id="KW-0479">Metal-binding</keyword>
<keyword id="KW-0561">Oxygen transport</keyword>
<keyword id="KW-0813">Transport</keyword>
<evidence type="ECO:0000250" key="1">
    <source>
        <dbReference type="UniProtKB" id="P62387"/>
    </source>
</evidence>
<evidence type="ECO:0000255" key="2">
    <source>
        <dbReference type="PROSITE-ProRule" id="PRU00238"/>
    </source>
</evidence>
<reference key="1">
    <citation type="journal article" date="1992" name="Eur. J. Biochem.">
        <title>The hemoglobins of Notothenia angustata, a temperate fish belonging to a family largely endemic to the Antarctic Ocean.</title>
        <authorList>
            <person name="Fago A."/>
            <person name="D'Avino R."/>
            <person name="di Prisco G."/>
        </authorList>
    </citation>
    <scope>PROTEIN SEQUENCE</scope>
</reference>